<name>PYRG_BACAN</name>
<comment type="function">
    <text evidence="1">Catalyzes the ATP-dependent amination of UTP to CTP with either L-glutamine or ammonia as the source of nitrogen. Regulates intracellular CTP levels through interactions with the four ribonucleotide triphosphates.</text>
</comment>
<comment type="catalytic activity">
    <reaction evidence="1">
        <text>UTP + L-glutamine + ATP + H2O = CTP + L-glutamate + ADP + phosphate + 2 H(+)</text>
        <dbReference type="Rhea" id="RHEA:26426"/>
        <dbReference type="ChEBI" id="CHEBI:15377"/>
        <dbReference type="ChEBI" id="CHEBI:15378"/>
        <dbReference type="ChEBI" id="CHEBI:29985"/>
        <dbReference type="ChEBI" id="CHEBI:30616"/>
        <dbReference type="ChEBI" id="CHEBI:37563"/>
        <dbReference type="ChEBI" id="CHEBI:43474"/>
        <dbReference type="ChEBI" id="CHEBI:46398"/>
        <dbReference type="ChEBI" id="CHEBI:58359"/>
        <dbReference type="ChEBI" id="CHEBI:456216"/>
        <dbReference type="EC" id="6.3.4.2"/>
    </reaction>
</comment>
<comment type="catalytic activity">
    <reaction evidence="1">
        <text>L-glutamine + H2O = L-glutamate + NH4(+)</text>
        <dbReference type="Rhea" id="RHEA:15889"/>
        <dbReference type="ChEBI" id="CHEBI:15377"/>
        <dbReference type="ChEBI" id="CHEBI:28938"/>
        <dbReference type="ChEBI" id="CHEBI:29985"/>
        <dbReference type="ChEBI" id="CHEBI:58359"/>
    </reaction>
</comment>
<comment type="catalytic activity">
    <reaction evidence="1">
        <text>UTP + NH4(+) + ATP = CTP + ADP + phosphate + 2 H(+)</text>
        <dbReference type="Rhea" id="RHEA:16597"/>
        <dbReference type="ChEBI" id="CHEBI:15378"/>
        <dbReference type="ChEBI" id="CHEBI:28938"/>
        <dbReference type="ChEBI" id="CHEBI:30616"/>
        <dbReference type="ChEBI" id="CHEBI:37563"/>
        <dbReference type="ChEBI" id="CHEBI:43474"/>
        <dbReference type="ChEBI" id="CHEBI:46398"/>
        <dbReference type="ChEBI" id="CHEBI:456216"/>
    </reaction>
</comment>
<comment type="activity regulation">
    <text evidence="1">Allosterically activated by GTP, when glutamine is the substrate; GTP has no effect on the reaction when ammonia is the substrate. The allosteric effector GTP functions by stabilizing the protein conformation that binds the tetrahedral intermediate(s) formed during glutamine hydrolysis. Inhibited by the product CTP, via allosteric rather than competitive inhibition.</text>
</comment>
<comment type="pathway">
    <text evidence="1">Pyrimidine metabolism; CTP biosynthesis via de novo pathway; CTP from UDP: step 2/2.</text>
</comment>
<comment type="subunit">
    <text evidence="1">Homotetramer.</text>
</comment>
<comment type="miscellaneous">
    <text evidence="1">CTPSs have evolved a hybrid strategy for distinguishing between UTP and CTP. The overlapping regions of the product feedback inhibitory and substrate sites recognize a common feature in both compounds, the triphosphate moiety. To differentiate isosteric substrate and product pyrimidine rings, an additional pocket far from the expected kinase/ligase catalytic site, specifically recognizes the cytosine and ribose portions of the product inhibitor.</text>
</comment>
<comment type="similarity">
    <text evidence="1">Belongs to the CTP synthase family.</text>
</comment>
<accession>Q81JW1</accession>
<accession>Q6HQG2</accession>
<accession>Q6KJT7</accession>
<organism>
    <name type="scientific">Bacillus anthracis</name>
    <dbReference type="NCBI Taxonomy" id="1392"/>
    <lineage>
        <taxon>Bacteria</taxon>
        <taxon>Bacillati</taxon>
        <taxon>Bacillota</taxon>
        <taxon>Bacilli</taxon>
        <taxon>Bacillales</taxon>
        <taxon>Bacillaceae</taxon>
        <taxon>Bacillus</taxon>
        <taxon>Bacillus cereus group</taxon>
    </lineage>
</organism>
<reference key="1">
    <citation type="journal article" date="2003" name="Nature">
        <title>The genome sequence of Bacillus anthracis Ames and comparison to closely related bacteria.</title>
        <authorList>
            <person name="Read T.D."/>
            <person name="Peterson S.N."/>
            <person name="Tourasse N.J."/>
            <person name="Baillie L.W."/>
            <person name="Paulsen I.T."/>
            <person name="Nelson K.E."/>
            <person name="Tettelin H."/>
            <person name="Fouts D.E."/>
            <person name="Eisen J.A."/>
            <person name="Gill S.R."/>
            <person name="Holtzapple E.K."/>
            <person name="Okstad O.A."/>
            <person name="Helgason E."/>
            <person name="Rilstone J."/>
            <person name="Wu M."/>
            <person name="Kolonay J.F."/>
            <person name="Beanan M.J."/>
            <person name="Dodson R.J."/>
            <person name="Brinkac L.M."/>
            <person name="Gwinn M.L."/>
            <person name="DeBoy R.T."/>
            <person name="Madpu R."/>
            <person name="Daugherty S.C."/>
            <person name="Durkin A.S."/>
            <person name="Haft D.H."/>
            <person name="Nelson W.C."/>
            <person name="Peterson J.D."/>
            <person name="Pop M."/>
            <person name="Khouri H.M."/>
            <person name="Radune D."/>
            <person name="Benton J.L."/>
            <person name="Mahamoud Y."/>
            <person name="Jiang L."/>
            <person name="Hance I.R."/>
            <person name="Weidman J.F."/>
            <person name="Berry K.J."/>
            <person name="Plaut R.D."/>
            <person name="Wolf A.M."/>
            <person name="Watkins K.L."/>
            <person name="Nierman W.C."/>
            <person name="Hazen A."/>
            <person name="Cline R.T."/>
            <person name="Redmond C."/>
            <person name="Thwaite J.E."/>
            <person name="White O."/>
            <person name="Salzberg S.L."/>
            <person name="Thomason B."/>
            <person name="Friedlander A.M."/>
            <person name="Koehler T.M."/>
            <person name="Hanna P.C."/>
            <person name="Kolstoe A.-B."/>
            <person name="Fraser C.M."/>
        </authorList>
    </citation>
    <scope>NUCLEOTIDE SEQUENCE [LARGE SCALE GENOMIC DNA]</scope>
    <source>
        <strain>Ames / isolate Porton</strain>
    </source>
</reference>
<reference key="2">
    <citation type="journal article" date="2009" name="J. Bacteriol.">
        <title>The complete genome sequence of Bacillus anthracis Ames 'Ancestor'.</title>
        <authorList>
            <person name="Ravel J."/>
            <person name="Jiang L."/>
            <person name="Stanley S.T."/>
            <person name="Wilson M.R."/>
            <person name="Decker R.S."/>
            <person name="Read T.D."/>
            <person name="Worsham P."/>
            <person name="Keim P.S."/>
            <person name="Salzberg S.L."/>
            <person name="Fraser-Liggett C.M."/>
            <person name="Rasko D.A."/>
        </authorList>
    </citation>
    <scope>NUCLEOTIDE SEQUENCE [LARGE SCALE GENOMIC DNA]</scope>
    <source>
        <strain>Ames ancestor</strain>
    </source>
</reference>
<reference key="3">
    <citation type="submission" date="2004-01" db="EMBL/GenBank/DDBJ databases">
        <title>Complete genome sequence of Bacillus anthracis Sterne.</title>
        <authorList>
            <person name="Brettin T.S."/>
            <person name="Bruce D."/>
            <person name="Challacombe J.F."/>
            <person name="Gilna P."/>
            <person name="Han C."/>
            <person name="Hill K."/>
            <person name="Hitchcock P."/>
            <person name="Jackson P."/>
            <person name="Keim P."/>
            <person name="Longmire J."/>
            <person name="Lucas S."/>
            <person name="Okinaka R."/>
            <person name="Richardson P."/>
            <person name="Rubin E."/>
            <person name="Tice H."/>
        </authorList>
    </citation>
    <scope>NUCLEOTIDE SEQUENCE [LARGE SCALE GENOMIC DNA]</scope>
    <source>
        <strain>Sterne</strain>
    </source>
</reference>
<keyword id="KW-0067">ATP-binding</keyword>
<keyword id="KW-0315">Glutamine amidotransferase</keyword>
<keyword id="KW-0436">Ligase</keyword>
<keyword id="KW-0460">Magnesium</keyword>
<keyword id="KW-0479">Metal-binding</keyword>
<keyword id="KW-0547">Nucleotide-binding</keyword>
<keyword id="KW-0665">Pyrimidine biosynthesis</keyword>
<keyword id="KW-1185">Reference proteome</keyword>
<evidence type="ECO:0000255" key="1">
    <source>
        <dbReference type="HAMAP-Rule" id="MF_01227"/>
    </source>
</evidence>
<proteinExistence type="inferred from homology"/>
<dbReference type="EC" id="6.3.4.2" evidence="1"/>
<dbReference type="EMBL" id="AE016879">
    <property type="protein sequence ID" value="AAP29225.1"/>
    <property type="molecule type" value="Genomic_DNA"/>
</dbReference>
<dbReference type="EMBL" id="AE017334">
    <property type="protein sequence ID" value="AAT34728.1"/>
    <property type="molecule type" value="Genomic_DNA"/>
</dbReference>
<dbReference type="EMBL" id="AE017225">
    <property type="protein sequence ID" value="AAT57476.1"/>
    <property type="molecule type" value="Genomic_DNA"/>
</dbReference>
<dbReference type="RefSeq" id="NP_847739.1">
    <property type="nucleotide sequence ID" value="NC_003997.3"/>
</dbReference>
<dbReference type="RefSeq" id="WP_000170456.1">
    <property type="nucleotide sequence ID" value="NZ_WXXJ01000038.1"/>
</dbReference>
<dbReference type="RefSeq" id="YP_031426.1">
    <property type="nucleotide sequence ID" value="NC_005945.1"/>
</dbReference>
<dbReference type="SMR" id="Q81JW1"/>
<dbReference type="IntAct" id="Q81JW1">
    <property type="interactions" value="15"/>
</dbReference>
<dbReference type="STRING" id="261594.GBAA_5583"/>
<dbReference type="MEROPS" id="C26.964"/>
<dbReference type="DNASU" id="1085278"/>
<dbReference type="GeneID" id="45025168"/>
<dbReference type="KEGG" id="ban:BA_5583"/>
<dbReference type="KEGG" id="banh:HYU01_27265"/>
<dbReference type="KEGG" id="bar:GBAA_5583"/>
<dbReference type="KEGG" id="bat:BAS5187"/>
<dbReference type="PATRIC" id="fig|198094.11.peg.5541"/>
<dbReference type="eggNOG" id="COG0504">
    <property type="taxonomic scope" value="Bacteria"/>
</dbReference>
<dbReference type="HOGENOM" id="CLU_011675_5_0_9"/>
<dbReference type="OMA" id="EFNNAYR"/>
<dbReference type="OrthoDB" id="9801107at2"/>
<dbReference type="UniPathway" id="UPA00159">
    <property type="reaction ID" value="UER00277"/>
</dbReference>
<dbReference type="Proteomes" id="UP000000427">
    <property type="component" value="Chromosome"/>
</dbReference>
<dbReference type="Proteomes" id="UP000000594">
    <property type="component" value="Chromosome"/>
</dbReference>
<dbReference type="GO" id="GO:0005829">
    <property type="term" value="C:cytosol"/>
    <property type="evidence" value="ECO:0007669"/>
    <property type="project" value="TreeGrafter"/>
</dbReference>
<dbReference type="GO" id="GO:0005524">
    <property type="term" value="F:ATP binding"/>
    <property type="evidence" value="ECO:0007669"/>
    <property type="project" value="UniProtKB-KW"/>
</dbReference>
<dbReference type="GO" id="GO:0003883">
    <property type="term" value="F:CTP synthase activity"/>
    <property type="evidence" value="ECO:0007669"/>
    <property type="project" value="UniProtKB-UniRule"/>
</dbReference>
<dbReference type="GO" id="GO:0004359">
    <property type="term" value="F:glutaminase activity"/>
    <property type="evidence" value="ECO:0007669"/>
    <property type="project" value="RHEA"/>
</dbReference>
<dbReference type="GO" id="GO:0042802">
    <property type="term" value="F:identical protein binding"/>
    <property type="evidence" value="ECO:0007669"/>
    <property type="project" value="TreeGrafter"/>
</dbReference>
<dbReference type="GO" id="GO:0046872">
    <property type="term" value="F:metal ion binding"/>
    <property type="evidence" value="ECO:0007669"/>
    <property type="project" value="UniProtKB-KW"/>
</dbReference>
<dbReference type="GO" id="GO:0044210">
    <property type="term" value="P:'de novo' CTP biosynthetic process"/>
    <property type="evidence" value="ECO:0007669"/>
    <property type="project" value="UniProtKB-UniRule"/>
</dbReference>
<dbReference type="GO" id="GO:0019856">
    <property type="term" value="P:pyrimidine nucleobase biosynthetic process"/>
    <property type="evidence" value="ECO:0007669"/>
    <property type="project" value="TreeGrafter"/>
</dbReference>
<dbReference type="CDD" id="cd03113">
    <property type="entry name" value="CTPS_N"/>
    <property type="match status" value="1"/>
</dbReference>
<dbReference type="CDD" id="cd01746">
    <property type="entry name" value="GATase1_CTP_Synthase"/>
    <property type="match status" value="1"/>
</dbReference>
<dbReference type="FunFam" id="3.40.50.300:FF:000009">
    <property type="entry name" value="CTP synthase"/>
    <property type="match status" value="1"/>
</dbReference>
<dbReference type="FunFam" id="3.40.50.880:FF:000002">
    <property type="entry name" value="CTP synthase"/>
    <property type="match status" value="1"/>
</dbReference>
<dbReference type="Gene3D" id="3.40.50.880">
    <property type="match status" value="1"/>
</dbReference>
<dbReference type="Gene3D" id="3.40.50.300">
    <property type="entry name" value="P-loop containing nucleotide triphosphate hydrolases"/>
    <property type="match status" value="1"/>
</dbReference>
<dbReference type="HAMAP" id="MF_01227">
    <property type="entry name" value="PyrG"/>
    <property type="match status" value="1"/>
</dbReference>
<dbReference type="InterPro" id="IPR029062">
    <property type="entry name" value="Class_I_gatase-like"/>
</dbReference>
<dbReference type="InterPro" id="IPR004468">
    <property type="entry name" value="CTP_synthase"/>
</dbReference>
<dbReference type="InterPro" id="IPR017456">
    <property type="entry name" value="CTP_synthase_N"/>
</dbReference>
<dbReference type="InterPro" id="IPR017926">
    <property type="entry name" value="GATASE"/>
</dbReference>
<dbReference type="InterPro" id="IPR033828">
    <property type="entry name" value="GATase1_CTP_Synthase"/>
</dbReference>
<dbReference type="InterPro" id="IPR027417">
    <property type="entry name" value="P-loop_NTPase"/>
</dbReference>
<dbReference type="NCBIfam" id="NF003792">
    <property type="entry name" value="PRK05380.1"/>
    <property type="match status" value="1"/>
</dbReference>
<dbReference type="NCBIfam" id="TIGR00337">
    <property type="entry name" value="PyrG"/>
    <property type="match status" value="1"/>
</dbReference>
<dbReference type="PANTHER" id="PTHR11550">
    <property type="entry name" value="CTP SYNTHASE"/>
    <property type="match status" value="1"/>
</dbReference>
<dbReference type="PANTHER" id="PTHR11550:SF0">
    <property type="entry name" value="CTP SYNTHASE-RELATED"/>
    <property type="match status" value="1"/>
</dbReference>
<dbReference type="Pfam" id="PF06418">
    <property type="entry name" value="CTP_synth_N"/>
    <property type="match status" value="1"/>
</dbReference>
<dbReference type="Pfam" id="PF00117">
    <property type="entry name" value="GATase"/>
    <property type="match status" value="1"/>
</dbReference>
<dbReference type="SUPFAM" id="SSF52317">
    <property type="entry name" value="Class I glutamine amidotransferase-like"/>
    <property type="match status" value="1"/>
</dbReference>
<dbReference type="SUPFAM" id="SSF52540">
    <property type="entry name" value="P-loop containing nucleoside triphosphate hydrolases"/>
    <property type="match status" value="1"/>
</dbReference>
<dbReference type="PROSITE" id="PS51273">
    <property type="entry name" value="GATASE_TYPE_1"/>
    <property type="match status" value="1"/>
</dbReference>
<feature type="chain" id="PRO_0000138162" description="CTP synthase">
    <location>
        <begin position="1"/>
        <end position="535"/>
    </location>
</feature>
<feature type="domain" description="Glutamine amidotransferase type-1" evidence="1">
    <location>
        <begin position="292"/>
        <end position="534"/>
    </location>
</feature>
<feature type="region of interest" description="Amidoligase domain" evidence="1">
    <location>
        <begin position="1"/>
        <end position="267"/>
    </location>
</feature>
<feature type="active site" description="Nucleophile; for glutamine hydrolysis" evidence="1">
    <location>
        <position position="381"/>
    </location>
</feature>
<feature type="active site" evidence="1">
    <location>
        <position position="507"/>
    </location>
</feature>
<feature type="active site" evidence="1">
    <location>
        <position position="509"/>
    </location>
</feature>
<feature type="binding site" evidence="1">
    <location>
        <position position="13"/>
    </location>
    <ligand>
        <name>CTP</name>
        <dbReference type="ChEBI" id="CHEBI:37563"/>
        <note>allosteric inhibitor</note>
    </ligand>
</feature>
<feature type="binding site" evidence="1">
    <location>
        <position position="13"/>
    </location>
    <ligand>
        <name>UTP</name>
        <dbReference type="ChEBI" id="CHEBI:46398"/>
    </ligand>
</feature>
<feature type="binding site" evidence="1">
    <location>
        <begin position="14"/>
        <end position="19"/>
    </location>
    <ligand>
        <name>ATP</name>
        <dbReference type="ChEBI" id="CHEBI:30616"/>
    </ligand>
</feature>
<feature type="binding site" evidence="1">
    <location>
        <position position="54"/>
    </location>
    <ligand>
        <name>L-glutamine</name>
        <dbReference type="ChEBI" id="CHEBI:58359"/>
    </ligand>
</feature>
<feature type="binding site" evidence="1">
    <location>
        <position position="71"/>
    </location>
    <ligand>
        <name>ATP</name>
        <dbReference type="ChEBI" id="CHEBI:30616"/>
    </ligand>
</feature>
<feature type="binding site" evidence="1">
    <location>
        <position position="71"/>
    </location>
    <ligand>
        <name>Mg(2+)</name>
        <dbReference type="ChEBI" id="CHEBI:18420"/>
    </ligand>
</feature>
<feature type="binding site" evidence="1">
    <location>
        <position position="141"/>
    </location>
    <ligand>
        <name>Mg(2+)</name>
        <dbReference type="ChEBI" id="CHEBI:18420"/>
    </ligand>
</feature>
<feature type="binding site" evidence="1">
    <location>
        <begin position="148"/>
        <end position="150"/>
    </location>
    <ligand>
        <name>CTP</name>
        <dbReference type="ChEBI" id="CHEBI:37563"/>
        <note>allosteric inhibitor</note>
    </ligand>
</feature>
<feature type="binding site" evidence="1">
    <location>
        <begin position="188"/>
        <end position="193"/>
    </location>
    <ligand>
        <name>CTP</name>
        <dbReference type="ChEBI" id="CHEBI:37563"/>
        <note>allosteric inhibitor</note>
    </ligand>
</feature>
<feature type="binding site" evidence="1">
    <location>
        <begin position="188"/>
        <end position="193"/>
    </location>
    <ligand>
        <name>UTP</name>
        <dbReference type="ChEBI" id="CHEBI:46398"/>
    </ligand>
</feature>
<feature type="binding site" evidence="1">
    <location>
        <position position="224"/>
    </location>
    <ligand>
        <name>CTP</name>
        <dbReference type="ChEBI" id="CHEBI:37563"/>
        <note>allosteric inhibitor</note>
    </ligand>
</feature>
<feature type="binding site" evidence="1">
    <location>
        <position position="224"/>
    </location>
    <ligand>
        <name>UTP</name>
        <dbReference type="ChEBI" id="CHEBI:46398"/>
    </ligand>
</feature>
<feature type="binding site" evidence="1">
    <location>
        <begin position="240"/>
        <end position="242"/>
    </location>
    <ligand>
        <name>ATP</name>
        <dbReference type="ChEBI" id="CHEBI:30616"/>
    </ligand>
</feature>
<feature type="binding site" evidence="1">
    <location>
        <position position="354"/>
    </location>
    <ligand>
        <name>L-glutamine</name>
        <dbReference type="ChEBI" id="CHEBI:58359"/>
    </ligand>
</feature>
<feature type="binding site" evidence="1">
    <location>
        <begin position="382"/>
        <end position="385"/>
    </location>
    <ligand>
        <name>L-glutamine</name>
        <dbReference type="ChEBI" id="CHEBI:58359"/>
    </ligand>
</feature>
<feature type="binding site" evidence="1">
    <location>
        <position position="405"/>
    </location>
    <ligand>
        <name>L-glutamine</name>
        <dbReference type="ChEBI" id="CHEBI:58359"/>
    </ligand>
</feature>
<feature type="binding site" evidence="1">
    <location>
        <position position="462"/>
    </location>
    <ligand>
        <name>L-glutamine</name>
        <dbReference type="ChEBI" id="CHEBI:58359"/>
    </ligand>
</feature>
<gene>
    <name evidence="1" type="primary">pyrG</name>
    <name type="synonym">ctrA</name>
    <name type="ordered locus">BA_5583</name>
    <name type="ordered locus">GBAA_5583</name>
    <name type="ordered locus">BAS5187</name>
</gene>
<protein>
    <recommendedName>
        <fullName evidence="1">CTP synthase</fullName>
        <ecNumber evidence="1">6.3.4.2</ecNumber>
    </recommendedName>
    <alternativeName>
        <fullName evidence="1">Cytidine 5'-triphosphate synthase</fullName>
    </alternativeName>
    <alternativeName>
        <fullName evidence="1">Cytidine triphosphate synthetase</fullName>
        <shortName evidence="1">CTP synthetase</shortName>
        <shortName evidence="1">CTPS</shortName>
    </alternativeName>
    <alternativeName>
        <fullName evidence="1">UTP--ammonia ligase</fullName>
    </alternativeName>
</protein>
<sequence length="535" mass="59753">MTKYIFVTGGVVSSLGKGITAASLGRLLKNRGLNVTIQKFDPYINVDPGTMSPYQHGEVFVTDDGAETDLDLGHYERFIDINLNKYSNVTTGKIYSSVLQKERRGEYLGGTVQVIPHITNEIKERVYRSGRETNADVVITEIGGTVGDIESLPFLEAIRQIKSDIGRDNVMYIHCTLIPYLKAAGEMKTKPTQHSVKELRSLGIQPNIIVVRTEMPVSQDMKDKLALFCDIDTKAVIEARDADTLYAVPLSLQEQNMDQIVCDHLKLDNPAADMTEWTALVEKVRNLSKKTKIALVGKYVELQDAYISVVEALRHAGYSFDTDVEVKWVNAEHVTAENVQELVGDTDGILVPGGFGDRGVEGKIVAIQYARENKVPFLGICLGMQLASIEFARNVLGLEGANSSEINPDTPYAIIDLLPEQKDVEDLGGTLRLGLYPCKLSEETNAYNAYNEPVVYERHRHRYEFNNQFRPDMEKAGFVFSGTSPDGRLVEIIELKDHPWFVAAQFHPELVSRPNRPQPLFHDFVKASLTNKESK</sequence>